<proteinExistence type="predicted"/>
<geneLocation type="plasmid">
    <name>pSymB</name>
    <name>megaplasmid 2</name>
</geneLocation>
<gene>
    <name type="primary">exoQ</name>
    <name type="ordered locus">RB1067</name>
    <name type="ORF">SMb20944</name>
</gene>
<comment type="function">
    <text>Involved in the production of exopolysaccharide.</text>
</comment>
<comment type="pathway">
    <text>Glycan metabolism; exopolysaccharide biosynthesis.</text>
</comment>
<comment type="subcellular location">
    <subcellularLocation>
        <location>Cell membrane</location>
        <topology>Multi-pass membrane protein</topology>
    </subcellularLocation>
</comment>
<feature type="chain" id="PRO_0000087126" description="Exopolysaccharide production protein ExoQ">
    <location>
        <begin position="1"/>
        <end position="435"/>
    </location>
</feature>
<feature type="transmembrane region" description="Helical" evidence="1">
    <location>
        <begin position="11"/>
        <end position="31"/>
    </location>
</feature>
<feature type="transmembrane region" description="Helical" evidence="1">
    <location>
        <begin position="35"/>
        <end position="55"/>
    </location>
</feature>
<feature type="transmembrane region" description="Helical" evidence="1">
    <location>
        <begin position="65"/>
        <end position="85"/>
    </location>
</feature>
<feature type="transmembrane region" description="Helical" evidence="1">
    <location>
        <begin position="117"/>
        <end position="137"/>
    </location>
</feature>
<feature type="transmembrane region" description="Helical" evidence="1">
    <location>
        <begin position="156"/>
        <end position="176"/>
    </location>
</feature>
<feature type="transmembrane region" description="Helical" evidence="1">
    <location>
        <begin position="178"/>
        <end position="198"/>
    </location>
</feature>
<feature type="transmembrane region" description="Helical" evidence="1">
    <location>
        <begin position="203"/>
        <end position="223"/>
    </location>
</feature>
<feature type="transmembrane region" description="Helical" evidence="1">
    <location>
        <begin position="230"/>
        <end position="250"/>
    </location>
</feature>
<feature type="transmembrane region" description="Helical" evidence="1">
    <location>
        <begin position="325"/>
        <end position="345"/>
    </location>
</feature>
<feature type="transmembrane region" description="Helical" evidence="1">
    <location>
        <begin position="361"/>
        <end position="381"/>
    </location>
</feature>
<feature type="sequence conflict" description="In Ref. 1; AAA26266." evidence="2" ref="1">
    <original>FG</original>
    <variation>LA</variation>
    <location>
        <begin position="238"/>
        <end position="239"/>
    </location>
</feature>
<feature type="sequence conflict" description="In Ref. 1; AAA26266." evidence="2" ref="1">
    <original>AATLLWPAGLDPAPYGRTFGPMIPRPGDS</original>
    <variation>QRRCSGRQDSIRRPTGELSA</variation>
    <location>
        <begin position="406"/>
        <end position="434"/>
    </location>
</feature>
<sequence>MRISKASLVRPGANEVYGIFALALSLFVFAYSARFGQVSILAYYGLWLPLVLVDYRKVLGNYASYLWIFAFTIFACITIFWSAAPSLSLRTGIQYLSHVVCALIAMRTIDIRTLTRGMIAGAAIVLLYSLLFGTYHYDPLDGTYSFVGAFASKNQLGFYASLGIYFAFAAVFVLGEKGLWMGAAGGAGLLAAYCLLTSQSATSVLTTAAVIGLCLGMRAITALRPASRKLLFIAASVFGGVAAVAMIYAGGVDLILGAFGKDSTLTGRTYLWQQGIEAAKVSPLVGVGYQAYWVQGFSEAERLWEEFYIGSRAGFHFHNTFIEAVVETGLIGLILLTMVLVTAFFGQLKRLLSEDRDPESMVLFGVGALLFVRAFVEIDILTPYHVGSFLLYFTAGKLTIPRRRRAATLLWPAGLDPAPYGRTFGPMIPRPGDSR</sequence>
<name>EXOQ_RHIME</name>
<dbReference type="EMBL" id="L05588">
    <property type="protein sequence ID" value="AAA26266.1"/>
    <property type="molecule type" value="Genomic_DNA"/>
</dbReference>
<dbReference type="EMBL" id="AL591985">
    <property type="protein sequence ID" value="CAC49467.1"/>
    <property type="molecule type" value="Genomic_DNA"/>
</dbReference>
<dbReference type="PIR" id="C95975">
    <property type="entry name" value="C95975"/>
</dbReference>
<dbReference type="RefSeq" id="NP_437607.1">
    <property type="nucleotide sequence ID" value="NC_003078.1"/>
</dbReference>
<dbReference type="RefSeq" id="WP_010975905.1">
    <property type="nucleotide sequence ID" value="NC_003078.1"/>
</dbReference>
<dbReference type="EnsemblBacteria" id="CAC49467">
    <property type="protein sequence ID" value="CAC49467"/>
    <property type="gene ID" value="SM_b20944"/>
</dbReference>
<dbReference type="KEGG" id="sme:SM_b20944"/>
<dbReference type="PATRIC" id="fig|266834.11.peg.5996"/>
<dbReference type="eggNOG" id="COG3307">
    <property type="taxonomic scope" value="Bacteria"/>
</dbReference>
<dbReference type="HOGENOM" id="CLU_039809_0_0_5"/>
<dbReference type="OrthoDB" id="4391260at2"/>
<dbReference type="BioCyc" id="MetaCyc:SM_B20944-MONOMER"/>
<dbReference type="UniPathway" id="UPA00631"/>
<dbReference type="Proteomes" id="UP000001976">
    <property type="component" value="Plasmid pSymB"/>
</dbReference>
<dbReference type="GO" id="GO:0005886">
    <property type="term" value="C:plasma membrane"/>
    <property type="evidence" value="ECO:0007669"/>
    <property type="project" value="UniProtKB-SubCell"/>
</dbReference>
<dbReference type="GO" id="GO:0000271">
    <property type="term" value="P:polysaccharide biosynthetic process"/>
    <property type="evidence" value="ECO:0007669"/>
    <property type="project" value="UniProtKB-KW"/>
</dbReference>
<dbReference type="InterPro" id="IPR007016">
    <property type="entry name" value="O-antigen_ligase-rel_domated"/>
</dbReference>
<dbReference type="InterPro" id="IPR051533">
    <property type="entry name" value="WaaL-like"/>
</dbReference>
<dbReference type="PANTHER" id="PTHR37422:SF13">
    <property type="entry name" value="LIPOPOLYSACCHARIDE BIOSYNTHESIS PROTEIN PA4999-RELATED"/>
    <property type="match status" value="1"/>
</dbReference>
<dbReference type="PANTHER" id="PTHR37422">
    <property type="entry name" value="TEICHURONIC ACID BIOSYNTHESIS PROTEIN TUAE"/>
    <property type="match status" value="1"/>
</dbReference>
<dbReference type="Pfam" id="PF04932">
    <property type="entry name" value="Wzy_C"/>
    <property type="match status" value="1"/>
</dbReference>
<accession>Q02729</accession>
<evidence type="ECO:0000255" key="1"/>
<evidence type="ECO:0000305" key="2"/>
<protein>
    <recommendedName>
        <fullName>Exopolysaccharide production protein ExoQ</fullName>
    </recommendedName>
</protein>
<reference key="1">
    <citation type="journal article" date="1993" name="Mol. Plant Microbe Interact.">
        <title>Genetic analysis of the Rhizobium meliloti exoYFQ operon: ExoY is homologous to sugar transferases and ExoQ represents a transmembrane protein.</title>
        <authorList>
            <person name="Mueller P."/>
            <person name="Keller M."/>
            <person name="Weng W.M."/>
            <person name="Quandt J."/>
            <person name="Arnold W."/>
            <person name="Puehler A."/>
        </authorList>
    </citation>
    <scope>NUCLEOTIDE SEQUENCE [GENOMIC DNA]</scope>
    <source>
        <strain>RCR2011 / SU47</strain>
    </source>
</reference>
<reference key="2">
    <citation type="journal article" date="2001" name="Proc. Natl. Acad. Sci. U.S.A.">
        <title>The complete sequence of the 1,683-kb pSymB megaplasmid from the N2-fixing endosymbiont Sinorhizobium meliloti.</title>
        <authorList>
            <person name="Finan T.M."/>
            <person name="Weidner S."/>
            <person name="Wong K."/>
            <person name="Buhrmester J."/>
            <person name="Chain P."/>
            <person name="Vorhoelter F.J."/>
            <person name="Hernandez-Lucas I."/>
            <person name="Becker A."/>
            <person name="Cowie A."/>
            <person name="Gouzy J."/>
            <person name="Golding B."/>
            <person name="Puehler A."/>
        </authorList>
    </citation>
    <scope>NUCLEOTIDE SEQUENCE [LARGE SCALE GENOMIC DNA]</scope>
    <source>
        <strain>1021</strain>
    </source>
</reference>
<reference key="3">
    <citation type="journal article" date="2001" name="Science">
        <title>The composite genome of the legume symbiont Sinorhizobium meliloti.</title>
        <authorList>
            <person name="Galibert F."/>
            <person name="Finan T.M."/>
            <person name="Long S.R."/>
            <person name="Puehler A."/>
            <person name="Abola P."/>
            <person name="Ampe F."/>
            <person name="Barloy-Hubler F."/>
            <person name="Barnett M.J."/>
            <person name="Becker A."/>
            <person name="Boistard P."/>
            <person name="Bothe G."/>
            <person name="Boutry M."/>
            <person name="Bowser L."/>
            <person name="Buhrmester J."/>
            <person name="Cadieu E."/>
            <person name="Capela D."/>
            <person name="Chain P."/>
            <person name="Cowie A."/>
            <person name="Davis R.W."/>
            <person name="Dreano S."/>
            <person name="Federspiel N.A."/>
            <person name="Fisher R.F."/>
            <person name="Gloux S."/>
            <person name="Godrie T."/>
            <person name="Goffeau A."/>
            <person name="Golding B."/>
            <person name="Gouzy J."/>
            <person name="Gurjal M."/>
            <person name="Hernandez-Lucas I."/>
            <person name="Hong A."/>
            <person name="Huizar L."/>
            <person name="Hyman R.W."/>
            <person name="Jones T."/>
            <person name="Kahn D."/>
            <person name="Kahn M.L."/>
            <person name="Kalman S."/>
            <person name="Keating D.H."/>
            <person name="Kiss E."/>
            <person name="Komp C."/>
            <person name="Lelaure V."/>
            <person name="Masuy D."/>
            <person name="Palm C."/>
            <person name="Peck M.C."/>
            <person name="Pohl T.M."/>
            <person name="Portetelle D."/>
            <person name="Purnelle B."/>
            <person name="Ramsperger U."/>
            <person name="Surzycki R."/>
            <person name="Thebault P."/>
            <person name="Vandenbol M."/>
            <person name="Vorhoelter F.J."/>
            <person name="Weidner S."/>
            <person name="Wells D.H."/>
            <person name="Wong K."/>
            <person name="Yeh K.-C."/>
            <person name="Batut J."/>
        </authorList>
    </citation>
    <scope>NUCLEOTIDE SEQUENCE [LARGE SCALE GENOMIC DNA]</scope>
    <source>
        <strain>1021</strain>
    </source>
</reference>
<keyword id="KW-1003">Cell membrane</keyword>
<keyword id="KW-0270">Exopolysaccharide synthesis</keyword>
<keyword id="KW-0472">Membrane</keyword>
<keyword id="KW-0614">Plasmid</keyword>
<keyword id="KW-1185">Reference proteome</keyword>
<keyword id="KW-0812">Transmembrane</keyword>
<keyword id="KW-1133">Transmembrane helix</keyword>
<organism>
    <name type="scientific">Rhizobium meliloti (strain 1021)</name>
    <name type="common">Ensifer meliloti</name>
    <name type="synonym">Sinorhizobium meliloti</name>
    <dbReference type="NCBI Taxonomy" id="266834"/>
    <lineage>
        <taxon>Bacteria</taxon>
        <taxon>Pseudomonadati</taxon>
        <taxon>Pseudomonadota</taxon>
        <taxon>Alphaproteobacteria</taxon>
        <taxon>Hyphomicrobiales</taxon>
        <taxon>Rhizobiaceae</taxon>
        <taxon>Sinorhizobium/Ensifer group</taxon>
        <taxon>Sinorhizobium</taxon>
    </lineage>
</organism>